<accession>O78495</accession>
<gene>
    <name type="primary">rpl20</name>
</gene>
<reference key="1">
    <citation type="journal article" date="1999" name="J. Mol. Evol.">
        <title>The plastid genome of the cryptophyte alga, Guillardia theta: complete sequence and conserved synteny groups confirm its common ancestry with red algae.</title>
        <authorList>
            <person name="Douglas S.E."/>
            <person name="Penny S.L."/>
        </authorList>
    </citation>
    <scope>NUCLEOTIDE SEQUENCE [LARGE SCALE GENOMIC DNA]</scope>
</reference>
<organism>
    <name type="scientific">Guillardia theta</name>
    <name type="common">Cryptophyte</name>
    <name type="synonym">Cryptomonas phi</name>
    <dbReference type="NCBI Taxonomy" id="55529"/>
    <lineage>
        <taxon>Eukaryota</taxon>
        <taxon>Cryptophyceae</taxon>
        <taxon>Pyrenomonadales</taxon>
        <taxon>Geminigeraceae</taxon>
        <taxon>Guillardia</taxon>
    </lineage>
</organism>
<comment type="function">
    <text evidence="1">Binds directly to 23S ribosomal RNA and is necessary for the in vitro assembly process of the 50S ribosomal subunit. It is not involved in the protein synthesizing functions of that subunit (By similarity).</text>
</comment>
<comment type="subcellular location">
    <subcellularLocation>
        <location>Plastid</location>
        <location>Chloroplast</location>
    </subcellularLocation>
</comment>
<comment type="similarity">
    <text evidence="2">Belongs to the bacterial ribosomal protein bL20 family.</text>
</comment>
<dbReference type="EMBL" id="AF041468">
    <property type="protein sequence ID" value="AAC35686.1"/>
    <property type="molecule type" value="Genomic_DNA"/>
</dbReference>
<dbReference type="RefSeq" id="NP_050752.1">
    <property type="nucleotide sequence ID" value="NC_000926.1"/>
</dbReference>
<dbReference type="SMR" id="O78495"/>
<dbReference type="GeneID" id="857057"/>
<dbReference type="HOGENOM" id="CLU_123265_0_1_1"/>
<dbReference type="OMA" id="CYRIAIR"/>
<dbReference type="GO" id="GO:0009507">
    <property type="term" value="C:chloroplast"/>
    <property type="evidence" value="ECO:0007669"/>
    <property type="project" value="UniProtKB-SubCell"/>
</dbReference>
<dbReference type="GO" id="GO:1990904">
    <property type="term" value="C:ribonucleoprotein complex"/>
    <property type="evidence" value="ECO:0007669"/>
    <property type="project" value="UniProtKB-KW"/>
</dbReference>
<dbReference type="GO" id="GO:0005840">
    <property type="term" value="C:ribosome"/>
    <property type="evidence" value="ECO:0007669"/>
    <property type="project" value="UniProtKB-KW"/>
</dbReference>
<dbReference type="GO" id="GO:0019843">
    <property type="term" value="F:rRNA binding"/>
    <property type="evidence" value="ECO:0007669"/>
    <property type="project" value="UniProtKB-UniRule"/>
</dbReference>
<dbReference type="GO" id="GO:0003735">
    <property type="term" value="F:structural constituent of ribosome"/>
    <property type="evidence" value="ECO:0007669"/>
    <property type="project" value="InterPro"/>
</dbReference>
<dbReference type="GO" id="GO:0000027">
    <property type="term" value="P:ribosomal large subunit assembly"/>
    <property type="evidence" value="ECO:0007669"/>
    <property type="project" value="UniProtKB-UniRule"/>
</dbReference>
<dbReference type="GO" id="GO:0006412">
    <property type="term" value="P:translation"/>
    <property type="evidence" value="ECO:0007669"/>
    <property type="project" value="InterPro"/>
</dbReference>
<dbReference type="CDD" id="cd07026">
    <property type="entry name" value="Ribosomal_L20"/>
    <property type="match status" value="1"/>
</dbReference>
<dbReference type="FunFam" id="1.10.1900.20:FF:000001">
    <property type="entry name" value="50S ribosomal protein L20"/>
    <property type="match status" value="1"/>
</dbReference>
<dbReference type="Gene3D" id="6.10.160.10">
    <property type="match status" value="1"/>
</dbReference>
<dbReference type="Gene3D" id="1.10.1900.20">
    <property type="entry name" value="Ribosomal protein L20"/>
    <property type="match status" value="1"/>
</dbReference>
<dbReference type="HAMAP" id="MF_00382">
    <property type="entry name" value="Ribosomal_bL20"/>
    <property type="match status" value="1"/>
</dbReference>
<dbReference type="InterPro" id="IPR005813">
    <property type="entry name" value="Ribosomal_bL20"/>
</dbReference>
<dbReference type="InterPro" id="IPR049946">
    <property type="entry name" value="RIBOSOMAL_L20_CS"/>
</dbReference>
<dbReference type="InterPro" id="IPR035566">
    <property type="entry name" value="Ribosomal_protein_bL20_C"/>
</dbReference>
<dbReference type="NCBIfam" id="TIGR01032">
    <property type="entry name" value="rplT_bact"/>
    <property type="match status" value="1"/>
</dbReference>
<dbReference type="PANTHER" id="PTHR10986">
    <property type="entry name" value="39S RIBOSOMAL PROTEIN L20"/>
    <property type="match status" value="1"/>
</dbReference>
<dbReference type="Pfam" id="PF00453">
    <property type="entry name" value="Ribosomal_L20"/>
    <property type="match status" value="1"/>
</dbReference>
<dbReference type="PRINTS" id="PR00062">
    <property type="entry name" value="RIBOSOMALL20"/>
</dbReference>
<dbReference type="SUPFAM" id="SSF74731">
    <property type="entry name" value="Ribosomal protein L20"/>
    <property type="match status" value="1"/>
</dbReference>
<dbReference type="PROSITE" id="PS00937">
    <property type="entry name" value="RIBOSOMAL_L20"/>
    <property type="match status" value="1"/>
</dbReference>
<name>RK20_GUITH</name>
<keyword id="KW-0150">Chloroplast</keyword>
<keyword id="KW-0934">Plastid</keyword>
<keyword id="KW-0687">Ribonucleoprotein</keyword>
<keyword id="KW-0689">Ribosomal protein</keyword>
<keyword id="KW-0694">RNA-binding</keyword>
<keyword id="KW-0699">rRNA-binding</keyword>
<protein>
    <recommendedName>
        <fullName evidence="2">Large ribosomal subunit protein bL20c</fullName>
    </recommendedName>
    <alternativeName>
        <fullName>50S ribosomal protein L20, chloroplastic</fullName>
    </alternativeName>
</protein>
<proteinExistence type="inferred from homology"/>
<feature type="chain" id="PRO_0000177289" description="Large ribosomal subunit protein bL20c">
    <location>
        <begin position="1"/>
        <end position="114"/>
    </location>
</feature>
<sequence>MVRIKRGNIARKRHKKILKLAKGFRGSHSKLFRIANQQVMKALRYGYHGRKRRKREFRSLWITRINAAVRIEGTNYSCFINSLKRQHIALNRKMLAQLAVSDQNAFKQLTKITH</sequence>
<evidence type="ECO:0000250" key="1"/>
<evidence type="ECO:0000305" key="2"/>
<geneLocation type="chloroplast"/>